<organism>
    <name type="scientific">Influenza A virus (strain A/Hong Kong/1/1968 H3N2)</name>
    <dbReference type="NCBI Taxonomy" id="506350"/>
    <lineage>
        <taxon>Viruses</taxon>
        <taxon>Riboviria</taxon>
        <taxon>Orthornavirae</taxon>
        <taxon>Negarnaviricota</taxon>
        <taxon>Polyploviricotina</taxon>
        <taxon>Insthoviricetes</taxon>
        <taxon>Articulavirales</taxon>
        <taxon>Orthomyxoviridae</taxon>
        <taxon>Alphainfluenzavirus</taxon>
        <taxon>Alphainfluenzavirus influenzae</taxon>
        <taxon>Influenza A virus</taxon>
    </lineage>
</organism>
<gene>
    <name evidence="1" type="primary">HA</name>
</gene>
<proteinExistence type="evidence at protein level"/>
<dbReference type="EMBL" id="AF348176">
    <property type="protein sequence ID" value="AAK51718.1"/>
    <property type="molecule type" value="Genomic_RNA"/>
</dbReference>
<dbReference type="EMBL" id="AF348177">
    <property type="protein sequence ID" value="AAK51719.1"/>
    <property type="molecule type" value="Genomic_RNA"/>
</dbReference>
<dbReference type="EMBL" id="AF348178">
    <property type="protein sequence ID" value="AAK51720.1"/>
    <property type="molecule type" value="Genomic_RNA"/>
</dbReference>
<dbReference type="EMBL" id="AF348179">
    <property type="protein sequence ID" value="AAK51721.1"/>
    <property type="molecule type" value="Genomic_RNA"/>
</dbReference>
<dbReference type="PDB" id="3SDY">
    <property type="method" value="X-ray"/>
    <property type="resolution" value="2.85 A"/>
    <property type="chains" value="A=27-345, B=346-521"/>
</dbReference>
<dbReference type="PDB" id="3ZTJ">
    <property type="method" value="X-ray"/>
    <property type="resolution" value="3.41 A"/>
    <property type="chains" value="A/C/E=17-345, B/D/F=346-520"/>
</dbReference>
<dbReference type="PDB" id="4FNK">
    <property type="method" value="X-ray"/>
    <property type="resolution" value="1.90 A"/>
    <property type="chains" value="A/C/E=27-345, B/D/F=346-519"/>
</dbReference>
<dbReference type="PDB" id="4FP8">
    <property type="method" value="X-ray"/>
    <property type="resolution" value="2.95 A"/>
    <property type="chains" value="A/B/C/D=59-325"/>
</dbReference>
<dbReference type="PDB" id="4FQR">
    <property type="method" value="X-ray"/>
    <property type="resolution" value="4.10 A"/>
    <property type="chains" value="A/C/E/G/I/K/M/O/Q/S/U/W=27-345, B/D/F/H/J/L/N/P/R/T/V/X=346-519"/>
</dbReference>
<dbReference type="PDB" id="4FQY">
    <property type="method" value="X-ray"/>
    <property type="resolution" value="5.25 A"/>
    <property type="chains" value="A=27-345, B=346-519"/>
</dbReference>
<dbReference type="PDB" id="4NM8">
    <property type="method" value="X-ray"/>
    <property type="resolution" value="4.00 A"/>
    <property type="chains" value="A/C/E=27-345, B/D/F=346-521"/>
</dbReference>
<dbReference type="PDB" id="4UBD">
    <property type="method" value="X-ray"/>
    <property type="resolution" value="3.50 A"/>
    <property type="chains" value="A/E/I/M/Q/U=25-344, B/F/J/N/R/V=346-520"/>
</dbReference>
<dbReference type="PDB" id="4WE4">
    <property type="method" value="X-ray"/>
    <property type="resolution" value="2.35 A"/>
    <property type="chains" value="A=25-344, B=346-517"/>
</dbReference>
<dbReference type="PDB" id="4ZCJ">
    <property type="method" value="X-ray"/>
    <property type="resolution" value="3.00 A"/>
    <property type="chains" value="A/C/E=27-345, B/D/F=346-521"/>
</dbReference>
<dbReference type="PDB" id="5K9K">
    <property type="method" value="X-ray"/>
    <property type="resolution" value="2.97 A"/>
    <property type="chains" value="F/I=17-519"/>
</dbReference>
<dbReference type="PDB" id="5K9Q">
    <property type="method" value="X-ray"/>
    <property type="resolution" value="2.50 A"/>
    <property type="chains" value="A/C/E/M/O/Q=24-342, B/D/F/N/P/R=348-517"/>
</dbReference>
<dbReference type="PDB" id="5KAN">
    <property type="method" value="X-ray"/>
    <property type="resolution" value="2.79 A"/>
    <property type="chains" value="A/C/E=24-342, B/D/F=349-521"/>
</dbReference>
<dbReference type="PDB" id="5KUY">
    <property type="method" value="X-ray"/>
    <property type="resolution" value="2.60 A"/>
    <property type="chains" value="A/C/E=27-345, B/D/F=346-521"/>
</dbReference>
<dbReference type="PDB" id="5T6N">
    <property type="method" value="X-ray"/>
    <property type="resolution" value="2.54 A"/>
    <property type="chains" value="A/C/E=27-345"/>
</dbReference>
<dbReference type="PDB" id="5THF">
    <property type="method" value="X-ray"/>
    <property type="resolution" value="2.59 A"/>
    <property type="chains" value="A/C/E=27-345, B/D/F=346-521"/>
</dbReference>
<dbReference type="PDB" id="5UMN">
    <property type="method" value="X-ray"/>
    <property type="resolution" value="1.97 A"/>
    <property type="chains" value="A/B=59-325"/>
</dbReference>
<dbReference type="PDB" id="6BKM">
    <property type="method" value="X-ray"/>
    <property type="resolution" value="2.20 A"/>
    <property type="chains" value="A/C/E=27-345"/>
</dbReference>
<dbReference type="PDB" id="6CEX">
    <property type="method" value="X-ray"/>
    <property type="resolution" value="2.57 A"/>
    <property type="chains" value="A/C/E=27-345"/>
</dbReference>
<dbReference type="PDB" id="6D0U">
    <property type="method" value="X-ray"/>
    <property type="resolution" value="3.25 A"/>
    <property type="chains" value="A/B/G/J=59-325"/>
</dbReference>
<dbReference type="PDB" id="6NHP">
    <property type="method" value="X-ray"/>
    <property type="resolution" value="2.25 A"/>
    <property type="chains" value="B/D/F=346-521"/>
</dbReference>
<dbReference type="PDB" id="6NHR">
    <property type="method" value="X-ray"/>
    <property type="resolution" value="2.10 A"/>
    <property type="chains" value="B/D/F=346-521"/>
</dbReference>
<dbReference type="PDB" id="6OCB">
    <property type="method" value="X-ray"/>
    <property type="resolution" value="2.10 A"/>
    <property type="chains" value="A=59-325"/>
</dbReference>
<dbReference type="PDB" id="6TZB">
    <property type="method" value="X-ray"/>
    <property type="resolution" value="2.24 A"/>
    <property type="chains" value="A/C/E=27-345"/>
</dbReference>
<dbReference type="PDB" id="6WXB">
    <property type="method" value="EM"/>
    <property type="resolution" value="2.90 A"/>
    <property type="chains" value="A/B/C=17-527"/>
</dbReference>
<dbReference type="PDB" id="7K37">
    <property type="method" value="EM"/>
    <property type="resolution" value="2.80 A"/>
    <property type="chains" value="A/C/E=1-345"/>
</dbReference>
<dbReference type="PDB" id="7K39">
    <property type="method" value="EM"/>
    <property type="resolution" value="3.00 A"/>
    <property type="chains" value="A/C/E=1-345"/>
</dbReference>
<dbReference type="PDB" id="7K3A">
    <property type="method" value="EM"/>
    <property type="resolution" value="4.20 A"/>
    <property type="chains" value="A/C/E=1-345"/>
</dbReference>
<dbReference type="PDB" id="7K3B">
    <property type="method" value="EM"/>
    <property type="resolution" value="3.40 A"/>
    <property type="chains" value="A/C/E=1-345"/>
</dbReference>
<dbReference type="PDB" id="7QA4">
    <property type="method" value="X-ray"/>
    <property type="resolution" value="2.19 A"/>
    <property type="chains" value="A=17-521"/>
</dbReference>
<dbReference type="PDB" id="7VDF">
    <property type="method" value="EM"/>
    <property type="resolution" value="2.56 A"/>
    <property type="chains" value="A/B/C=17-527"/>
</dbReference>
<dbReference type="PDB" id="7X6L">
    <property type="method" value="EM"/>
    <property type="resolution" value="3.70 A"/>
    <property type="chains" value="A/C/D=17-345"/>
</dbReference>
<dbReference type="PDB" id="8PK3">
    <property type="method" value="EM"/>
    <property type="resolution" value="3.40 A"/>
    <property type="chains" value="A/B/C=27-344"/>
</dbReference>
<dbReference type="PDBsum" id="3SDY"/>
<dbReference type="PDBsum" id="3ZTJ"/>
<dbReference type="PDBsum" id="4FNK"/>
<dbReference type="PDBsum" id="4FP8"/>
<dbReference type="PDBsum" id="4FQR"/>
<dbReference type="PDBsum" id="4FQY"/>
<dbReference type="PDBsum" id="4NM8"/>
<dbReference type="PDBsum" id="4UBD"/>
<dbReference type="PDBsum" id="4WE4"/>
<dbReference type="PDBsum" id="4ZCJ"/>
<dbReference type="PDBsum" id="5K9K"/>
<dbReference type="PDBsum" id="5K9Q"/>
<dbReference type="PDBsum" id="5KAN"/>
<dbReference type="PDBsum" id="5KUY"/>
<dbReference type="PDBsum" id="5T6N"/>
<dbReference type="PDBsum" id="5THF"/>
<dbReference type="PDBsum" id="5UMN"/>
<dbReference type="PDBsum" id="6BKM"/>
<dbReference type="PDBsum" id="6CEX"/>
<dbReference type="PDBsum" id="6D0U"/>
<dbReference type="PDBsum" id="6NHP"/>
<dbReference type="PDBsum" id="6NHR"/>
<dbReference type="PDBsum" id="6OCB"/>
<dbReference type="PDBsum" id="6TZB"/>
<dbReference type="PDBsum" id="6WXB"/>
<dbReference type="PDBsum" id="7K37"/>
<dbReference type="PDBsum" id="7K39"/>
<dbReference type="PDBsum" id="7K3A"/>
<dbReference type="PDBsum" id="7K3B"/>
<dbReference type="PDBsum" id="7QA4"/>
<dbReference type="PDBsum" id="7VDF"/>
<dbReference type="PDBsum" id="7X6L"/>
<dbReference type="PDBsum" id="8PK3"/>
<dbReference type="EMDB" id="EMD-17724"/>
<dbReference type="EMDB" id="EMD-21954"/>
<dbReference type="EMDB" id="EMD-22652"/>
<dbReference type="EMDB" id="EMD-22653"/>
<dbReference type="EMDB" id="EMD-22654"/>
<dbReference type="EMDB" id="EMD-22655"/>
<dbReference type="EMDB" id="EMD-31916"/>
<dbReference type="EMDB" id="EMD-33023"/>
<dbReference type="EMDB" id="EMD-8731"/>
<dbReference type="SMR" id="Q91MA7"/>
<dbReference type="GlyCosmos" id="Q91MA7">
    <property type="glycosylation" value="7 sites, No reported glycans"/>
</dbReference>
<dbReference type="ABCD" id="Q91MA7">
    <property type="antibodies" value="14 sequenced antibodies"/>
</dbReference>
<dbReference type="EvolutionaryTrace" id="Q91MA7"/>
<dbReference type="Proteomes" id="UP000142359">
    <property type="component" value="Genome"/>
</dbReference>
<dbReference type="GO" id="GO:0020002">
    <property type="term" value="C:host cell plasma membrane"/>
    <property type="evidence" value="ECO:0007669"/>
    <property type="project" value="UniProtKB-SubCell"/>
</dbReference>
<dbReference type="GO" id="GO:0016020">
    <property type="term" value="C:membrane"/>
    <property type="evidence" value="ECO:0007669"/>
    <property type="project" value="UniProtKB-UniRule"/>
</dbReference>
<dbReference type="GO" id="GO:0019031">
    <property type="term" value="C:viral envelope"/>
    <property type="evidence" value="ECO:0007669"/>
    <property type="project" value="UniProtKB-UniRule"/>
</dbReference>
<dbReference type="GO" id="GO:0055036">
    <property type="term" value="C:virion membrane"/>
    <property type="evidence" value="ECO:0007669"/>
    <property type="project" value="UniProtKB-SubCell"/>
</dbReference>
<dbReference type="GO" id="GO:0046789">
    <property type="term" value="F:host cell surface receptor binding"/>
    <property type="evidence" value="ECO:0007669"/>
    <property type="project" value="UniProtKB-UniRule"/>
</dbReference>
<dbReference type="GO" id="GO:0075512">
    <property type="term" value="P:clathrin-dependent endocytosis of virus by host cell"/>
    <property type="evidence" value="ECO:0007669"/>
    <property type="project" value="UniProtKB-UniRule"/>
</dbReference>
<dbReference type="GO" id="GO:0039654">
    <property type="term" value="P:fusion of virus membrane with host endosome membrane"/>
    <property type="evidence" value="ECO:0007669"/>
    <property type="project" value="UniProtKB-UniRule"/>
</dbReference>
<dbReference type="GO" id="GO:0019064">
    <property type="term" value="P:fusion of virus membrane with host plasma membrane"/>
    <property type="evidence" value="ECO:0007669"/>
    <property type="project" value="InterPro"/>
</dbReference>
<dbReference type="GO" id="GO:0046761">
    <property type="term" value="P:viral budding from plasma membrane"/>
    <property type="evidence" value="ECO:0007669"/>
    <property type="project" value="UniProtKB-UniRule"/>
</dbReference>
<dbReference type="GO" id="GO:0019062">
    <property type="term" value="P:virion attachment to host cell"/>
    <property type="evidence" value="ECO:0007669"/>
    <property type="project" value="UniProtKB-KW"/>
</dbReference>
<dbReference type="FunFam" id="3.90.20.10:FF:000001">
    <property type="entry name" value="Hemagglutinin"/>
    <property type="match status" value="1"/>
</dbReference>
<dbReference type="FunFam" id="3.90.209.20:FF:000001">
    <property type="entry name" value="Hemagglutinin"/>
    <property type="match status" value="1"/>
</dbReference>
<dbReference type="Gene3D" id="3.90.20.10">
    <property type="match status" value="1"/>
</dbReference>
<dbReference type="Gene3D" id="3.90.209.20">
    <property type="match status" value="1"/>
</dbReference>
<dbReference type="HAMAP" id="MF_04072">
    <property type="entry name" value="INFV_HEMA"/>
    <property type="match status" value="1"/>
</dbReference>
<dbReference type="InterPro" id="IPR008980">
    <property type="entry name" value="Capsid_hemagglutn"/>
</dbReference>
<dbReference type="InterPro" id="IPR013828">
    <property type="entry name" value="Hemagglutn_HA1_a/b_dom_sf"/>
</dbReference>
<dbReference type="InterPro" id="IPR000149">
    <property type="entry name" value="Hemagglutn_influenz_A"/>
</dbReference>
<dbReference type="InterPro" id="IPR001364">
    <property type="entry name" value="Hemagglutn_influenz_A/B"/>
</dbReference>
<dbReference type="Pfam" id="PF00509">
    <property type="entry name" value="Hemagglutinin"/>
    <property type="match status" value="1"/>
</dbReference>
<dbReference type="PRINTS" id="PR00330">
    <property type="entry name" value="HEMAGGLUTN1"/>
</dbReference>
<dbReference type="PRINTS" id="PR00329">
    <property type="entry name" value="HEMAGGLUTN12"/>
</dbReference>
<dbReference type="SUPFAM" id="SSF58064">
    <property type="entry name" value="Influenza hemagglutinin (stalk)"/>
    <property type="match status" value="1"/>
</dbReference>
<dbReference type="SUPFAM" id="SSF49818">
    <property type="entry name" value="Viral protein domain"/>
    <property type="match status" value="1"/>
</dbReference>
<organismHost>
    <name type="scientific">Aves</name>
    <dbReference type="NCBI Taxonomy" id="8782"/>
</organismHost>
<organismHost>
    <name type="scientific">Cetacea</name>
    <name type="common">whales</name>
    <dbReference type="NCBI Taxonomy" id="9721"/>
</organismHost>
<organismHost>
    <name type="scientific">Homo sapiens</name>
    <name type="common">Human</name>
    <dbReference type="NCBI Taxonomy" id="9606"/>
</organismHost>
<organismHost>
    <name type="scientific">Phocidae</name>
    <name type="common">true seals</name>
    <dbReference type="NCBI Taxonomy" id="9709"/>
</organismHost>
<organismHost>
    <name type="scientific">Sus scrofa</name>
    <name type="common">Pig</name>
    <dbReference type="NCBI Taxonomy" id="9823"/>
</organismHost>
<reference key="1">
    <citation type="journal article" date="2001" name="Proc. Natl. Acad. Sci. U.S.A.">
        <title>Pattern of mutation in the genome of influenza A virus on adaptation to increased virulence in the mouse lung: identification of functional themes.</title>
        <authorList>
            <person name="Brown E.G."/>
            <person name="Liu H."/>
            <person name="Kit L.C."/>
            <person name="Baird S."/>
            <person name="Nesrallah M."/>
        </authorList>
    </citation>
    <scope>NUCLEOTIDE SEQUENCE [GENOMIC RNA]</scope>
    <source>
        <strain>Isolate MA12</strain>
        <strain>Isolate MA20</strain>
        <strain>Isolate MA20C</strain>
        <strain>Isolate Wildtype</strain>
    </source>
</reference>
<protein>
    <recommendedName>
        <fullName evidence="1">Hemagglutinin</fullName>
    </recommendedName>
    <component>
        <recommendedName>
            <fullName evidence="1">Hemagglutinin HA1 chain</fullName>
        </recommendedName>
    </component>
    <component>
        <recommendedName>
            <fullName evidence="1">Hemagglutinin HA2 chain</fullName>
        </recommendedName>
    </component>
</protein>
<keyword id="KW-0002">3D-structure</keyword>
<keyword id="KW-1167">Clathrin- and caveolin-independent endocytosis of virus by host</keyword>
<keyword id="KW-1165">Clathrin-mediated endocytosis of virus by host</keyword>
<keyword id="KW-1015">Disulfide bond</keyword>
<keyword id="KW-1170">Fusion of virus membrane with host endosomal membrane</keyword>
<keyword id="KW-1168">Fusion of virus membrane with host membrane</keyword>
<keyword id="KW-0325">Glycoprotein</keyword>
<keyword id="KW-0348">Hemagglutinin</keyword>
<keyword id="KW-1032">Host cell membrane</keyword>
<keyword id="KW-1043">Host membrane</keyword>
<keyword id="KW-0945">Host-virus interaction</keyword>
<keyword id="KW-0449">Lipoprotein</keyword>
<keyword id="KW-0472">Membrane</keyword>
<keyword id="KW-0564">Palmitate</keyword>
<keyword id="KW-0732">Signal</keyword>
<keyword id="KW-0812">Transmembrane</keyword>
<keyword id="KW-1133">Transmembrane helix</keyword>
<keyword id="KW-1161">Viral attachment to host cell</keyword>
<keyword id="KW-0261">Viral envelope protein</keyword>
<keyword id="KW-1162">Viral penetration into host cytoplasm</keyword>
<keyword id="KW-0946">Virion</keyword>
<keyword id="KW-1164">Virus endocytosis by host</keyword>
<keyword id="KW-1160">Virus entry into host cell</keyword>
<comment type="function">
    <text evidence="1">Binds to sialic acid-containing receptors on the cell surface, bringing about the attachment of the virus particle to the cell. This attachment induces virion internalization either through clathrin-dependent endocytosis or through clathrin- and caveolin-independent pathway. Plays a major role in the determination of host range restriction and virulence. Class I viral fusion protein. Responsible for penetration of the virus into the cell cytoplasm by mediating the fusion of the membrane of the endocytosed virus particle with the endosomal membrane. Low pH in endosomes induces an irreversible conformational change in HA2, releasing the fusion hydrophobic peptide. Several trimers are required to form a competent fusion pore.</text>
</comment>
<comment type="subunit">
    <text evidence="1">Homotrimer of disulfide-linked HA1-HA2.</text>
</comment>
<comment type="subcellular location">
    <subcellularLocation>
        <location evidence="1">Virion membrane</location>
        <topology evidence="1">Single-pass type I membrane protein</topology>
    </subcellularLocation>
    <subcellularLocation>
        <location evidence="1">Host apical cell membrane</location>
        <topology evidence="1">Single-pass type I membrane protein</topology>
    </subcellularLocation>
    <text evidence="1">Targeted to the apical plasma membrane in epithelial polarized cells through a signal present in the transmembrane domain. Associated with glycosphingolipid- and cholesterol-enriched detergent-resistant lipid rafts.</text>
</comment>
<comment type="PTM">
    <text evidence="1">Palmitoylated.</text>
</comment>
<comment type="PTM">
    <text evidence="1">In natural infection, inactive HA is matured into HA1 and HA2 outside the cell by one or more trypsin-like, arginine-specific endoprotease secreted by the bronchial epithelial cells. One identified protease that may be involved in this process is secreted in lungs by club cells.</text>
</comment>
<comment type="miscellaneous">
    <text>Major glycoprotein, comprises over 80% of the envelope proteins present in virus particle.</text>
</comment>
<comment type="miscellaneous">
    <text>The extent of infection into host organism is determined by HA. Influenza viruses bud from the apical surface of polarized epithelial cells (e.g. bronchial epithelial cells) into lumen of lungs and are therefore usually pneumotropic. The reason is that HA is cleaved by tryptase clara which is restricted to lungs. However, HAs of H5 and H7 pantropic avian viruses subtypes can be cleaved by furin and subtilisin-type enzymes, allowing the virus to grow in other organs than lungs.</text>
</comment>
<comment type="miscellaneous">
    <text evidence="2">The influenza A genome consist of 8 RNA segments. Genetic variation of hemagglutinin and/or neuraminidase genes results in the emergence of new influenza strains. The mechanism of variation can be the result of point mutations or the result of genetic reassortment between segments of two different strains.</text>
</comment>
<comment type="similarity">
    <text evidence="1">Belongs to the influenza viruses hemagglutinin family.</text>
</comment>
<name>HEMA_I68A4</name>
<evidence type="ECO:0000255" key="1">
    <source>
        <dbReference type="HAMAP-Rule" id="MF_04072"/>
    </source>
</evidence>
<evidence type="ECO:0000305" key="2"/>
<evidence type="ECO:0007829" key="3">
    <source>
        <dbReference type="PDB" id="3ZTJ"/>
    </source>
</evidence>
<evidence type="ECO:0007829" key="4">
    <source>
        <dbReference type="PDB" id="4FNK"/>
    </source>
</evidence>
<evidence type="ECO:0007829" key="5">
    <source>
        <dbReference type="PDB" id="4WE4"/>
    </source>
</evidence>
<evidence type="ECO:0007829" key="6">
    <source>
        <dbReference type="PDB" id="5K9K"/>
    </source>
</evidence>
<evidence type="ECO:0007829" key="7">
    <source>
        <dbReference type="PDB" id="5KAN"/>
    </source>
</evidence>
<evidence type="ECO:0007829" key="8">
    <source>
        <dbReference type="PDB" id="5THF"/>
    </source>
</evidence>
<evidence type="ECO:0007829" key="9">
    <source>
        <dbReference type="PDB" id="6WXB"/>
    </source>
</evidence>
<evidence type="ECO:0007829" key="10">
    <source>
        <dbReference type="PDB" id="7QA4"/>
    </source>
</evidence>
<feature type="signal peptide" evidence="1">
    <location>
        <begin position="1"/>
        <end position="16"/>
    </location>
</feature>
<feature type="chain" id="PRO_0000440414" description="Hemagglutinin" evidence="1">
    <location>
        <begin position="17"/>
        <end position="566"/>
    </location>
</feature>
<feature type="chain" id="PRO_0000280193" description="Hemagglutinin HA1 chain">
    <location>
        <begin position="17"/>
        <end position="344"/>
    </location>
</feature>
<feature type="chain" id="PRO_0000280194" description="Hemagglutinin HA2 chain" evidence="1">
    <location>
        <begin position="346"/>
        <end position="566"/>
    </location>
</feature>
<feature type="topological domain" description="Extracellular" evidence="1">
    <location>
        <begin position="17"/>
        <end position="530"/>
    </location>
</feature>
<feature type="transmembrane region" description="Helical" evidence="1">
    <location>
        <begin position="531"/>
        <end position="551"/>
    </location>
</feature>
<feature type="topological domain" description="Cytoplasmic" evidence="1">
    <location>
        <begin position="552"/>
        <end position="566"/>
    </location>
</feature>
<feature type="site" description="Cleavage; by host" evidence="1">
    <location>
        <begin position="345"/>
        <end position="346"/>
    </location>
</feature>
<feature type="lipid moiety-binding region" description="S-palmitoyl cysteine; by host" evidence="1">
    <location>
        <position position="555"/>
    </location>
</feature>
<feature type="lipid moiety-binding region" description="S-palmitoyl cysteine; by host" evidence="1">
    <location>
        <position position="562"/>
    </location>
</feature>
<feature type="lipid moiety-binding region" description="S-palmitoyl cysteine; by host" evidence="1">
    <location>
        <position position="565"/>
    </location>
</feature>
<feature type="glycosylation site" description="N-linked (GlcNAc...) asparagine; by host" evidence="1">
    <location>
        <position position="24"/>
    </location>
</feature>
<feature type="glycosylation site" description="N-linked (GlcNAc...) asparagine; by host" evidence="1">
    <location>
        <position position="38"/>
    </location>
</feature>
<feature type="glycosylation site" description="N-linked (GlcNAc...) asparagine; by host" evidence="1">
    <location>
        <position position="54"/>
    </location>
</feature>
<feature type="glycosylation site" description="N-linked (GlcNAc...) asparagine; by host" evidence="1">
    <location>
        <position position="97"/>
    </location>
</feature>
<feature type="glycosylation site" description="N-linked (GlcNAc...) asparagine; by host" evidence="1">
    <location>
        <position position="181"/>
    </location>
</feature>
<feature type="glycosylation site" description="N-linked (GlcNAc...) asparagine; by host" evidence="1">
    <location>
        <position position="301"/>
    </location>
</feature>
<feature type="glycosylation site" description="N-linked (GlcNAc...) asparagine; by host" evidence="1">
    <location>
        <position position="499"/>
    </location>
</feature>
<feature type="disulfide bond" description="Interchain (between HA1 and HA2 chains)" evidence="1">
    <location>
        <begin position="30"/>
        <end position="482"/>
    </location>
</feature>
<feature type="disulfide bond" evidence="1">
    <location>
        <begin position="68"/>
        <end position="293"/>
    </location>
</feature>
<feature type="disulfide bond" evidence="1">
    <location>
        <begin position="80"/>
        <end position="92"/>
    </location>
</feature>
<feature type="disulfide bond" evidence="1">
    <location>
        <begin position="113"/>
        <end position="155"/>
    </location>
</feature>
<feature type="disulfide bond" evidence="1">
    <location>
        <begin position="297"/>
        <end position="321"/>
    </location>
</feature>
<feature type="disulfide bond" evidence="1">
    <location>
        <begin position="489"/>
        <end position="493"/>
    </location>
</feature>
<feature type="sequence variant" description="In strain: Isolate MA20C, Isolate MA20, Isolate MA12.">
    <original>G</original>
    <variation>W</variation>
    <location>
        <position position="234"/>
    </location>
</feature>
<feature type="sequence variant" description="In strain: Isolate MA20C, Isolate MA20, Isolate MA12.">
    <original>T</original>
    <variation>N</variation>
    <location>
        <position position="501"/>
    </location>
</feature>
<feature type="strand" evidence="4">
    <location>
        <begin position="27"/>
        <end position="34"/>
    </location>
</feature>
<feature type="strand" evidence="4">
    <location>
        <begin position="40"/>
        <end position="42"/>
    </location>
</feature>
<feature type="strand" evidence="4">
    <location>
        <begin position="50"/>
        <end position="53"/>
    </location>
</feature>
<feature type="strand" evidence="4">
    <location>
        <begin position="55"/>
        <end position="57"/>
    </location>
</feature>
<feature type="strand" evidence="4">
    <location>
        <begin position="67"/>
        <end position="72"/>
    </location>
</feature>
<feature type="strand" evidence="4">
    <location>
        <begin position="74"/>
        <end position="76"/>
    </location>
</feature>
<feature type="strand" evidence="3">
    <location>
        <begin position="78"/>
        <end position="80"/>
    </location>
</feature>
<feature type="helix" evidence="4">
    <location>
        <begin position="82"/>
        <end position="87"/>
    </location>
</feature>
<feature type="helix" evidence="4">
    <location>
        <begin position="90"/>
        <end position="95"/>
    </location>
</feature>
<feature type="strand" evidence="4">
    <location>
        <begin position="101"/>
        <end position="105"/>
    </location>
</feature>
<feature type="helix" evidence="4">
    <location>
        <begin position="121"/>
        <end position="131"/>
    </location>
</feature>
<feature type="strand" evidence="4">
    <location>
        <begin position="136"/>
        <end position="138"/>
    </location>
</feature>
<feature type="strand" evidence="10">
    <location>
        <begin position="146"/>
        <end position="150"/>
    </location>
</feature>
<feature type="strand" evidence="4">
    <location>
        <begin position="152"/>
        <end position="157"/>
    </location>
</feature>
<feature type="strand" evidence="4">
    <location>
        <begin position="160"/>
        <end position="162"/>
    </location>
</feature>
<feature type="strand" evidence="4">
    <location>
        <begin position="167"/>
        <end position="169"/>
    </location>
</feature>
<feature type="strand" evidence="4">
    <location>
        <begin position="171"/>
        <end position="173"/>
    </location>
</feature>
<feature type="strand" evidence="4">
    <location>
        <begin position="180"/>
        <end position="185"/>
    </location>
</feature>
<feature type="strand" evidence="4">
    <location>
        <begin position="188"/>
        <end position="190"/>
    </location>
</feature>
<feature type="strand" evidence="4">
    <location>
        <begin position="192"/>
        <end position="200"/>
    </location>
</feature>
<feature type="helix" evidence="4">
    <location>
        <begin position="204"/>
        <end position="211"/>
    </location>
</feature>
<feature type="strand" evidence="4">
    <location>
        <begin position="212"/>
        <end position="215"/>
    </location>
</feature>
<feature type="strand" evidence="4">
    <location>
        <begin position="218"/>
        <end position="221"/>
    </location>
</feature>
<feature type="strand" evidence="4">
    <location>
        <begin position="226"/>
        <end position="229"/>
    </location>
</feature>
<feature type="strand" evidence="9">
    <location>
        <begin position="239"/>
        <end position="241"/>
    </location>
</feature>
<feature type="strand" evidence="4">
    <location>
        <begin position="245"/>
        <end position="253"/>
    </location>
</feature>
<feature type="strand" evidence="4">
    <location>
        <begin position="258"/>
        <end position="265"/>
    </location>
</feature>
<feature type="strand" evidence="4">
    <location>
        <begin position="267"/>
        <end position="275"/>
    </location>
</feature>
<feature type="strand" evidence="4">
    <location>
        <begin position="282"/>
        <end position="285"/>
    </location>
</feature>
<feature type="strand" evidence="4">
    <location>
        <begin position="290"/>
        <end position="294"/>
    </location>
</feature>
<feature type="strand" evidence="4">
    <location>
        <begin position="296"/>
        <end position="299"/>
    </location>
</feature>
<feature type="strand" evidence="4">
    <location>
        <begin position="302"/>
        <end position="304"/>
    </location>
</feature>
<feature type="strand" evidence="4">
    <location>
        <begin position="307"/>
        <end position="311"/>
    </location>
</feature>
<feature type="strand" evidence="4">
    <location>
        <begin position="318"/>
        <end position="320"/>
    </location>
</feature>
<feature type="strand" evidence="6">
    <location>
        <begin position="326"/>
        <end position="328"/>
    </location>
</feature>
<feature type="strand" evidence="4">
    <location>
        <begin position="331"/>
        <end position="333"/>
    </location>
</feature>
<feature type="helix" evidence="6">
    <location>
        <begin position="347"/>
        <end position="349"/>
    </location>
</feature>
<feature type="turn" evidence="4">
    <location>
        <begin position="352"/>
        <end position="354"/>
    </location>
</feature>
<feature type="strand" evidence="7">
    <location>
        <begin position="359"/>
        <end position="361"/>
    </location>
</feature>
<feature type="strand" evidence="4">
    <location>
        <begin position="366"/>
        <end position="373"/>
    </location>
</feature>
<feature type="strand" evidence="4">
    <location>
        <begin position="376"/>
        <end position="381"/>
    </location>
</feature>
<feature type="helix" evidence="4">
    <location>
        <begin position="383"/>
        <end position="401"/>
    </location>
</feature>
<feature type="strand" evidence="5">
    <location>
        <begin position="405"/>
        <end position="407"/>
    </location>
</feature>
<feature type="helix" evidence="4">
    <location>
        <begin position="421"/>
        <end position="471"/>
    </location>
</feature>
<feature type="helix" evidence="4">
    <location>
        <begin position="472"/>
        <end position="474"/>
    </location>
</feature>
<feature type="strand" evidence="4">
    <location>
        <begin position="475"/>
        <end position="477"/>
    </location>
</feature>
<feature type="strand" evidence="4">
    <location>
        <begin position="479"/>
        <end position="485"/>
    </location>
</feature>
<feature type="helix" evidence="4">
    <location>
        <begin position="491"/>
        <end position="498"/>
    </location>
</feature>
<feature type="helix" evidence="4">
    <location>
        <begin position="504"/>
        <end position="516"/>
    </location>
</feature>
<feature type="turn" evidence="8">
    <location>
        <begin position="519"/>
        <end position="521"/>
    </location>
</feature>
<accession>Q91MA7</accession>
<accession>Q910M5</accession>
<sequence>MKTIIALSYIFCLALGQDLPGNDNSTATLCLGHHAVPNGTLVKTITDDQIEVTNATELVQSSSTGKICNNPHRILDGIDCTLIDALLGDPHCDVFQNETWDLFVERSKAFSNCYPYDVPDYASLRSLVASSGTLEFITEGFTWTGVTQNGGSNACKRGPGSGFFSRLNWLTKSGSTYPVLNVTMPNNDNFDKLYIWGVHHPSTNQEQTSLYVQASGRVTVSTRRSQQTIIPNIGSRPWVRGLSSRISIYWTIVKPGDVLVINSNGNLIAPRGYFKMRTGKSSIMRSDAPIDTCISECITPNGSIPNDKPFQNVNKITYGACPKYVKQNTLKLATGMRNVPEKQTRGLFGAIAGFIENGWEGMIDGWYGFRHQNSEGTGQAADLKSTQAAIDQINGKLNRVIEKTNEKFHQIEKEFSEVEGRIQDLEKYVEDTKIDLWSYNAELLVALENQHTIDLTDSEMNKLFEKTRRQLRENAEDMGNGCFKIYHKCDNACIESIRNGTYDHDVYRDEALNNRFQIKGVELKSGYKDWILWISFAISCFLLCVVLLGFIMWACQRGNIRCNICI</sequence>